<evidence type="ECO:0000250" key="1">
    <source>
        <dbReference type="UniProtKB" id="P00362"/>
    </source>
</evidence>
<evidence type="ECO:0000250" key="2">
    <source>
        <dbReference type="UniProtKB" id="Q6GIL8"/>
    </source>
</evidence>
<evidence type="ECO:0000269" key="3">
    <source>
    </source>
</evidence>
<evidence type="ECO:0000269" key="4">
    <source>
    </source>
</evidence>
<evidence type="ECO:0000269" key="5">
    <source>
    </source>
</evidence>
<evidence type="ECO:0000269" key="6">
    <source>
    </source>
</evidence>
<evidence type="ECO:0000303" key="7">
    <source>
    </source>
</evidence>
<evidence type="ECO:0000303" key="8">
    <source>
    </source>
</evidence>
<evidence type="ECO:0000305" key="9"/>
<evidence type="ECO:0007829" key="10">
    <source>
        <dbReference type="PDB" id="1HDG"/>
    </source>
</evidence>
<reference key="1">
    <citation type="journal article" date="1993" name="Eur. J. Biochem.">
        <title>Functional expression of D-glyceraldehyde-3-phosphate dehydrogenase from the hyperthermophilic eubacterium Thermotoga maritima in Escherichia coli. Authenticity and kinetic properties of the recombinant enzyme.</title>
        <authorList>
            <person name="Tomschy A."/>
            <person name="Glockhuber R."/>
            <person name="Jaenicke R."/>
        </authorList>
    </citation>
    <scope>NUCLEOTIDE SEQUENCE [GENOMIC DNA]</scope>
    <scope>CATALYTIC ACTIVITY</scope>
    <scope>SUBCELLULAR LOCATION</scope>
    <source>
        <strain>ATCC 43589 / DSM 3109 / JCM 10099 / NBRC 100826 / MSB8</strain>
    </source>
</reference>
<reference key="2">
    <citation type="journal article" date="1999" name="Nature">
        <title>Evidence for lateral gene transfer between Archaea and Bacteria from genome sequence of Thermotoga maritima.</title>
        <authorList>
            <person name="Nelson K.E."/>
            <person name="Clayton R.A."/>
            <person name="Gill S.R."/>
            <person name="Gwinn M.L."/>
            <person name="Dodson R.J."/>
            <person name="Haft D.H."/>
            <person name="Hickey E.K."/>
            <person name="Peterson J.D."/>
            <person name="Nelson W.C."/>
            <person name="Ketchum K.A."/>
            <person name="McDonald L.A."/>
            <person name="Utterback T.R."/>
            <person name="Malek J.A."/>
            <person name="Linher K.D."/>
            <person name="Garrett M.M."/>
            <person name="Stewart A.M."/>
            <person name="Cotton M.D."/>
            <person name="Pratt M.S."/>
            <person name="Phillips C.A."/>
            <person name="Richardson D.L."/>
            <person name="Heidelberg J.F."/>
            <person name="Sutton G.G."/>
            <person name="Fleischmann R.D."/>
            <person name="Eisen J.A."/>
            <person name="White O."/>
            <person name="Salzberg S.L."/>
            <person name="Smith H.O."/>
            <person name="Venter J.C."/>
            <person name="Fraser C.M."/>
        </authorList>
    </citation>
    <scope>NUCLEOTIDE SEQUENCE [LARGE SCALE GENOMIC DNA]</scope>
    <source>
        <strain>ATCC 43589 / DSM 3109 / JCM 10099 / NBRC 100826 / MSB8</strain>
    </source>
</reference>
<reference key="3">
    <citation type="journal article" date="1990" name="Eur. J. Biochem.">
        <title>Complete amino-acid sequence of glyceraldehyde-3-phosphate dehydrogenase from the hyperthermophilic eubacterium Thermotoga maritima.</title>
        <authorList>
            <person name="Schultes V."/>
            <person name="Deutzmann R."/>
            <person name="Jaenicke R."/>
        </authorList>
    </citation>
    <scope>PROTEIN SEQUENCE OF 2-333</scope>
    <source>
        <strain>ATCC 43589 / DSM 3109 / JCM 10099 / NBRC 100826 / MSB8</strain>
    </source>
</reference>
<reference key="4">
    <citation type="journal article" date="1990" name="Biochemistry">
        <title>Extremely thermostable D-glyceraldehyde-3-phosphate dehydrogenase from the eubacterium Thermotoga maritima.</title>
        <authorList>
            <person name="Wrba A."/>
            <person name="Schweiger A."/>
            <person name="Schultes V."/>
            <person name="Jaenicke R."/>
            <person name="Zavodszky P."/>
        </authorList>
    </citation>
    <scope>FUNCTION</scope>
    <scope>CATALYTIC ACTIVITY</scope>
    <scope>BIOPHYSICOCHEMICAL PROPERTIES</scope>
    <scope>SUBUNIT</scope>
    <source>
        <strain>ATCC 43589 / DSM 3109 / JCM 10099 / NBRC 100826 / MSB8</strain>
    </source>
</reference>
<reference key="5">
    <citation type="journal article" date="1995" name="J. Mol. Biol.">
        <title>The crystal structure of holo-glyceraldehyde-3-phosphate dehydrogenase from the hyperthermophilic bacterium Thermotoga maritima at 2.5-A resolution.</title>
        <authorList>
            <person name="Korndoerfer I."/>
            <person name="Steipe B."/>
            <person name="Huber R."/>
            <person name="Tomschy A."/>
            <person name="Jaenicke R."/>
        </authorList>
    </citation>
    <scope>X-RAY CRYSTALLOGRAPHY (2.5 ANGSTROMS) IN COMPLEX WITH NAD AND SUBSTRATE ANALOG</scope>
    <scope>SUBUNIT</scope>
</reference>
<keyword id="KW-0002">3D-structure</keyword>
<keyword id="KW-0963">Cytoplasm</keyword>
<keyword id="KW-0903">Direct protein sequencing</keyword>
<keyword id="KW-0324">Glycolysis</keyword>
<keyword id="KW-0520">NAD</keyword>
<keyword id="KW-0547">Nucleotide-binding</keyword>
<keyword id="KW-0560">Oxidoreductase</keyword>
<keyword id="KW-1185">Reference proteome</keyword>
<gene>
    <name type="primary">gap</name>
    <name type="ordered locus">TM_0688</name>
</gene>
<protein>
    <recommendedName>
        <fullName evidence="7 8">Glyceraldehyde-3-phosphate dehydrogenase</fullName>
        <shortName evidence="7 8">GAPDH</shortName>
        <ecNumber evidence="3 6">1.2.1.12</ecNumber>
    </recommendedName>
    <alternativeName>
        <fullName evidence="8">NAD-dependent glyceraldehyde-3-phosphate dehydrogenase</fullName>
    </alternativeName>
</protein>
<dbReference type="EC" id="1.2.1.12" evidence="3 6"/>
<dbReference type="EMBL" id="X72629">
    <property type="protein sequence ID" value="CAA51205.1"/>
    <property type="molecule type" value="Genomic_DNA"/>
</dbReference>
<dbReference type="EMBL" id="AE000512">
    <property type="protein sequence ID" value="AAD35770.1"/>
    <property type="molecule type" value="Genomic_DNA"/>
</dbReference>
<dbReference type="PIR" id="S33325">
    <property type="entry name" value="DEHGGT"/>
</dbReference>
<dbReference type="RefSeq" id="NP_228497.1">
    <property type="nucleotide sequence ID" value="NC_000853.1"/>
</dbReference>
<dbReference type="RefSeq" id="WP_004081074.1">
    <property type="nucleotide sequence ID" value="NZ_CP011107.1"/>
</dbReference>
<dbReference type="PDB" id="1HDG">
    <property type="method" value="X-ray"/>
    <property type="resolution" value="2.50 A"/>
    <property type="chains" value="O/Q=2-333"/>
</dbReference>
<dbReference type="PDBsum" id="1HDG"/>
<dbReference type="SMR" id="P17721"/>
<dbReference type="FunCoup" id="P17721">
    <property type="interactions" value="360"/>
</dbReference>
<dbReference type="STRING" id="243274.TM_0688"/>
<dbReference type="PaxDb" id="243274-THEMA_01225"/>
<dbReference type="EnsemblBacteria" id="AAD35770">
    <property type="protein sequence ID" value="AAD35770"/>
    <property type="gene ID" value="TM_0688"/>
</dbReference>
<dbReference type="KEGG" id="tma:TM0688"/>
<dbReference type="KEGG" id="tmi:THEMA_01225"/>
<dbReference type="KEGG" id="tmm:Tmari_0688"/>
<dbReference type="KEGG" id="tmw:THMA_0703"/>
<dbReference type="eggNOG" id="COG0057">
    <property type="taxonomic scope" value="Bacteria"/>
</dbReference>
<dbReference type="InParanoid" id="P17721"/>
<dbReference type="OrthoDB" id="9803304at2"/>
<dbReference type="BioCyc" id="MetaCyc:MONOMER-401"/>
<dbReference type="SABIO-RK" id="P17721"/>
<dbReference type="UniPathway" id="UPA00109">
    <property type="reaction ID" value="UER00184"/>
</dbReference>
<dbReference type="EvolutionaryTrace" id="P17721"/>
<dbReference type="Proteomes" id="UP000008183">
    <property type="component" value="Chromosome"/>
</dbReference>
<dbReference type="GO" id="GO:0005737">
    <property type="term" value="C:cytoplasm"/>
    <property type="evidence" value="ECO:0007669"/>
    <property type="project" value="UniProtKB-SubCell"/>
</dbReference>
<dbReference type="GO" id="GO:0004365">
    <property type="term" value="F:glyceraldehyde-3-phosphate dehydrogenase (NAD+) (phosphorylating) activity"/>
    <property type="evidence" value="ECO:0000250"/>
    <property type="project" value="UniProtKB"/>
</dbReference>
<dbReference type="GO" id="GO:0051287">
    <property type="term" value="F:NAD binding"/>
    <property type="evidence" value="ECO:0000314"/>
    <property type="project" value="UniProtKB"/>
</dbReference>
<dbReference type="GO" id="GO:0050661">
    <property type="term" value="F:NADP binding"/>
    <property type="evidence" value="ECO:0007669"/>
    <property type="project" value="InterPro"/>
</dbReference>
<dbReference type="GO" id="GO:0006006">
    <property type="term" value="P:glucose metabolic process"/>
    <property type="evidence" value="ECO:0000318"/>
    <property type="project" value="GO_Central"/>
</dbReference>
<dbReference type="GO" id="GO:0006096">
    <property type="term" value="P:glycolytic process"/>
    <property type="evidence" value="ECO:0007669"/>
    <property type="project" value="UniProtKB-UniPathway"/>
</dbReference>
<dbReference type="CDD" id="cd18126">
    <property type="entry name" value="GAPDH_I_C"/>
    <property type="match status" value="1"/>
</dbReference>
<dbReference type="CDD" id="cd05214">
    <property type="entry name" value="GAPDH_I_N"/>
    <property type="match status" value="1"/>
</dbReference>
<dbReference type="FunFam" id="3.30.360.10:FF:000002">
    <property type="entry name" value="Glyceraldehyde-3-phosphate dehydrogenase"/>
    <property type="match status" value="1"/>
</dbReference>
<dbReference type="FunFam" id="3.40.50.720:FF:000001">
    <property type="entry name" value="Glyceraldehyde-3-phosphate dehydrogenase"/>
    <property type="match status" value="1"/>
</dbReference>
<dbReference type="Gene3D" id="3.30.360.10">
    <property type="entry name" value="Dihydrodipicolinate Reductase, domain 2"/>
    <property type="match status" value="1"/>
</dbReference>
<dbReference type="Gene3D" id="3.40.50.720">
    <property type="entry name" value="NAD(P)-binding Rossmann-like Domain"/>
    <property type="match status" value="1"/>
</dbReference>
<dbReference type="InterPro" id="IPR020831">
    <property type="entry name" value="GlycerAld/Erythrose_P_DH"/>
</dbReference>
<dbReference type="InterPro" id="IPR020830">
    <property type="entry name" value="GlycerAld_3-P_DH_AS"/>
</dbReference>
<dbReference type="InterPro" id="IPR020829">
    <property type="entry name" value="GlycerAld_3-P_DH_cat"/>
</dbReference>
<dbReference type="InterPro" id="IPR020828">
    <property type="entry name" value="GlycerAld_3-P_DH_NAD(P)-bd"/>
</dbReference>
<dbReference type="InterPro" id="IPR006424">
    <property type="entry name" value="Glyceraldehyde-3-P_DH_1"/>
</dbReference>
<dbReference type="InterPro" id="IPR036291">
    <property type="entry name" value="NAD(P)-bd_dom_sf"/>
</dbReference>
<dbReference type="NCBIfam" id="TIGR01534">
    <property type="entry name" value="GAPDH-I"/>
    <property type="match status" value="1"/>
</dbReference>
<dbReference type="PANTHER" id="PTHR43148">
    <property type="entry name" value="GLYCERALDEHYDE-3-PHOSPHATE DEHYDROGENASE 2"/>
    <property type="match status" value="1"/>
</dbReference>
<dbReference type="Pfam" id="PF02800">
    <property type="entry name" value="Gp_dh_C"/>
    <property type="match status" value="1"/>
</dbReference>
<dbReference type="Pfam" id="PF00044">
    <property type="entry name" value="Gp_dh_N"/>
    <property type="match status" value="1"/>
</dbReference>
<dbReference type="PIRSF" id="PIRSF000149">
    <property type="entry name" value="GAP_DH"/>
    <property type="match status" value="1"/>
</dbReference>
<dbReference type="PRINTS" id="PR00078">
    <property type="entry name" value="G3PDHDRGNASE"/>
</dbReference>
<dbReference type="SMART" id="SM00846">
    <property type="entry name" value="Gp_dh_N"/>
    <property type="match status" value="1"/>
</dbReference>
<dbReference type="SUPFAM" id="SSF55347">
    <property type="entry name" value="Glyceraldehyde-3-phosphate dehydrogenase-like, C-terminal domain"/>
    <property type="match status" value="1"/>
</dbReference>
<dbReference type="SUPFAM" id="SSF51735">
    <property type="entry name" value="NAD(P)-binding Rossmann-fold domains"/>
    <property type="match status" value="1"/>
</dbReference>
<dbReference type="PROSITE" id="PS00071">
    <property type="entry name" value="GAPDH"/>
    <property type="match status" value="1"/>
</dbReference>
<accession>P17721</accession>
<sequence length="333" mass="36425">MARVAINGFGRIGRLVYRIIYERKNPDIEVVAINDLTDTKTLAHLLKYDSVHKKFPGKVEYTENSLIVDGKEIKVFAEPDPSKLPWKDLGVDFVIESTGVFRNREKAELHLQAGAKKVIITAPAKGEDITVVIGCNEDQLKPEHTIISCASCTTNSIAPIVKVLHEKFGIVSGMLTTVHSYTNDQRVLDLPHKDLRRARAAAVNIIPTTTGAAKAVALVVPEVKGKLDGMAIRVPTPDGSITDLTVLVEKETTVEEVNAVMKEATEGRLKGIIGYNDEPIVSSDIIGTTFSGIFDATITNVIGGKLVKVASWYDNEYGYSNRVVDTLELLLKM</sequence>
<proteinExistence type="evidence at protein level"/>
<feature type="initiator methionine" description="Removed" evidence="4">
    <location>
        <position position="1"/>
    </location>
</feature>
<feature type="chain" id="PRO_0000145711" description="Glyceraldehyde-3-phosphate dehydrogenase">
    <location>
        <begin position="2"/>
        <end position="333"/>
    </location>
</feature>
<feature type="active site" description="Nucleophile" evidence="1">
    <location>
        <position position="152"/>
    </location>
</feature>
<feature type="binding site" evidence="5">
    <location>
        <begin position="11"/>
        <end position="12"/>
    </location>
    <ligand>
        <name>NAD(+)</name>
        <dbReference type="ChEBI" id="CHEBI:57540"/>
    </ligand>
</feature>
<feature type="binding site" evidence="5">
    <location>
        <position position="35"/>
    </location>
    <ligand>
        <name>NAD(+)</name>
        <dbReference type="ChEBI" id="CHEBI:57540"/>
    </ligand>
</feature>
<feature type="binding site" evidence="5">
    <location>
        <position position="121"/>
    </location>
    <ligand>
        <name>NAD(+)</name>
        <dbReference type="ChEBI" id="CHEBI:57540"/>
    </ligand>
</feature>
<feature type="binding site" evidence="5">
    <location>
        <begin position="151"/>
        <end position="153"/>
    </location>
    <ligand>
        <name>D-glyceraldehyde 3-phosphate</name>
        <dbReference type="ChEBI" id="CHEBI:59776"/>
    </ligand>
</feature>
<feature type="binding site" evidence="5">
    <location>
        <position position="182"/>
    </location>
    <ligand>
        <name>D-glyceraldehyde 3-phosphate</name>
        <dbReference type="ChEBI" id="CHEBI:59776"/>
    </ligand>
</feature>
<feature type="binding site" evidence="5">
    <location>
        <position position="183"/>
    </location>
    <ligand>
        <name>NAD(+)</name>
        <dbReference type="ChEBI" id="CHEBI:57540"/>
    </ligand>
</feature>
<feature type="binding site" evidence="5">
    <location>
        <position position="197"/>
    </location>
    <ligand>
        <name>D-glyceraldehyde 3-phosphate</name>
        <dbReference type="ChEBI" id="CHEBI:59776"/>
    </ligand>
</feature>
<feature type="binding site" evidence="5">
    <location>
        <begin position="210"/>
        <end position="211"/>
    </location>
    <ligand>
        <name>D-glyceraldehyde 3-phosphate</name>
        <dbReference type="ChEBI" id="CHEBI:59776"/>
    </ligand>
</feature>
<feature type="binding site" evidence="5">
    <location>
        <position position="233"/>
    </location>
    <ligand>
        <name>D-glyceraldehyde 3-phosphate</name>
        <dbReference type="ChEBI" id="CHEBI:59776"/>
    </ligand>
</feature>
<feature type="binding site" evidence="5">
    <location>
        <position position="315"/>
    </location>
    <ligand>
        <name>NAD(+)</name>
        <dbReference type="ChEBI" id="CHEBI:57540"/>
    </ligand>
</feature>
<feature type="site" description="Activates thiol group during catalysis" evidence="2">
    <location>
        <position position="179"/>
    </location>
</feature>
<feature type="strand" evidence="10">
    <location>
        <begin position="3"/>
        <end position="7"/>
    </location>
</feature>
<feature type="helix" evidence="10">
    <location>
        <begin position="11"/>
        <end position="23"/>
    </location>
</feature>
<feature type="strand" evidence="10">
    <location>
        <begin position="29"/>
        <end position="34"/>
    </location>
</feature>
<feature type="helix" evidence="10">
    <location>
        <begin position="39"/>
        <end position="47"/>
    </location>
</feature>
<feature type="turn" evidence="10">
    <location>
        <begin position="50"/>
        <end position="52"/>
    </location>
</feature>
<feature type="strand" evidence="10">
    <location>
        <begin position="59"/>
        <end position="61"/>
    </location>
</feature>
<feature type="strand" evidence="10">
    <location>
        <begin position="63"/>
        <end position="68"/>
    </location>
</feature>
<feature type="strand" evidence="10">
    <location>
        <begin position="71"/>
        <end position="76"/>
    </location>
</feature>
<feature type="helix" evidence="10">
    <location>
        <begin position="81"/>
        <end position="83"/>
    </location>
</feature>
<feature type="helix" evidence="10">
    <location>
        <begin position="86"/>
        <end position="89"/>
    </location>
</feature>
<feature type="strand" evidence="10">
    <location>
        <begin position="93"/>
        <end position="96"/>
    </location>
</feature>
<feature type="strand" evidence="10">
    <location>
        <begin position="98"/>
        <end position="100"/>
    </location>
</feature>
<feature type="helix" evidence="10">
    <location>
        <begin position="104"/>
        <end position="107"/>
    </location>
</feature>
<feature type="helix" evidence="10">
    <location>
        <begin position="109"/>
        <end position="112"/>
    </location>
</feature>
<feature type="strand" evidence="10">
    <location>
        <begin position="116"/>
        <end position="122"/>
    </location>
</feature>
<feature type="strand" evidence="10">
    <location>
        <begin position="128"/>
        <end position="130"/>
    </location>
</feature>
<feature type="turn" evidence="10">
    <location>
        <begin position="133"/>
        <end position="135"/>
    </location>
</feature>
<feature type="helix" evidence="10">
    <location>
        <begin position="137"/>
        <end position="139"/>
    </location>
</feature>
<feature type="strand" evidence="10">
    <location>
        <begin position="146"/>
        <end position="148"/>
    </location>
</feature>
<feature type="helix" evidence="10">
    <location>
        <begin position="152"/>
        <end position="168"/>
    </location>
</feature>
<feature type="strand" evidence="10">
    <location>
        <begin position="170"/>
        <end position="180"/>
    </location>
</feature>
<feature type="strand" evidence="10">
    <location>
        <begin position="185"/>
        <end position="189"/>
    </location>
</feature>
<feature type="turn" evidence="10">
    <location>
        <begin position="195"/>
        <end position="198"/>
    </location>
</feature>
<feature type="helix" evidence="10">
    <location>
        <begin position="201"/>
        <end position="203"/>
    </location>
</feature>
<feature type="strand" evidence="10">
    <location>
        <begin position="206"/>
        <end position="208"/>
    </location>
</feature>
<feature type="helix" evidence="10">
    <location>
        <begin position="212"/>
        <end position="219"/>
    </location>
</feature>
<feature type="helix" evidence="10">
    <location>
        <begin position="221"/>
        <end position="223"/>
    </location>
</feature>
<feature type="turn" evidence="10">
    <location>
        <begin position="224"/>
        <end position="226"/>
    </location>
</feature>
<feature type="strand" evidence="10">
    <location>
        <begin position="227"/>
        <end position="235"/>
    </location>
</feature>
<feature type="strand" evidence="10">
    <location>
        <begin position="240"/>
        <end position="250"/>
    </location>
</feature>
<feature type="helix" evidence="10">
    <location>
        <begin position="254"/>
        <end position="265"/>
    </location>
</feature>
<feature type="turn" evidence="10">
    <location>
        <begin position="266"/>
        <end position="272"/>
    </location>
</feature>
<feature type="strand" evidence="10">
    <location>
        <begin position="273"/>
        <end position="276"/>
    </location>
</feature>
<feature type="helix" evidence="10">
    <location>
        <begin position="282"/>
        <end position="285"/>
    </location>
</feature>
<feature type="strand" evidence="10">
    <location>
        <begin position="291"/>
        <end position="295"/>
    </location>
</feature>
<feature type="turn" evidence="10">
    <location>
        <begin position="296"/>
        <end position="298"/>
    </location>
</feature>
<feature type="strand" evidence="10">
    <location>
        <begin position="300"/>
        <end position="302"/>
    </location>
</feature>
<feature type="turn" evidence="10">
    <location>
        <begin position="303"/>
        <end position="305"/>
    </location>
</feature>
<feature type="strand" evidence="10">
    <location>
        <begin position="306"/>
        <end position="313"/>
    </location>
</feature>
<feature type="helix" evidence="10">
    <location>
        <begin position="317"/>
        <end position="329"/>
    </location>
</feature>
<feature type="helix" evidence="10">
    <location>
        <begin position="330"/>
        <end position="332"/>
    </location>
</feature>
<name>G3P_THEMA</name>
<comment type="function">
    <text evidence="1 3">Catalyzes the oxidative phosphorylation of glyceraldehyde 3-phosphate (G3P) to 1,3-bisphosphoglycerate (BPG) using the cofactor NAD (PubMed:2271518). The first reaction step involves the formation of a hemiacetal intermediate between G3P and a cysteine residue, and this hemiacetal intermediate is then oxidized to a thioester, with concomitant reduction of NAD to NADH. The reduced NADH is then exchanged with the second NAD, and the thioester is attacked by a nucleophilic inorganic phosphate to produce BPG (By similarity).</text>
</comment>
<comment type="catalytic activity">
    <reaction evidence="3 6">
        <text>D-glyceraldehyde 3-phosphate + phosphate + NAD(+) = (2R)-3-phospho-glyceroyl phosphate + NADH + H(+)</text>
        <dbReference type="Rhea" id="RHEA:10300"/>
        <dbReference type="ChEBI" id="CHEBI:15378"/>
        <dbReference type="ChEBI" id="CHEBI:43474"/>
        <dbReference type="ChEBI" id="CHEBI:57540"/>
        <dbReference type="ChEBI" id="CHEBI:57604"/>
        <dbReference type="ChEBI" id="CHEBI:57945"/>
        <dbReference type="ChEBI" id="CHEBI:59776"/>
        <dbReference type="EC" id="1.2.1.12"/>
    </reaction>
</comment>
<comment type="biophysicochemical properties">
    <kinetics>
        <KM evidence="3">440 uM for glyceraldehyde-3-phosphate (at pH 8.0 and 40 degrees Celsius)</KM>
        <KM evidence="3">360 uM for glyceraldehyde-3-phosphate (at pH 8.0 and 50 degrees Celsius)</KM>
        <KM evidence="3">400 uM for glyceraldehyde-3-phosphate (at pH 8.0 and 60 degrees Celsius)</KM>
        <KM evidence="3">18.6 uM for NAD(+) (at pH 8.0 and 40 degrees Celsius)</KM>
        <KM evidence="3">37 uM for NAD(+) (at pH 8.0 and 50 degrees Celsius)</KM>
        <KM evidence="3">78.8 uM for NAD(+) (at pH 8.0 and 60 degrees Celsius)</KM>
    </kinetics>
</comment>
<comment type="pathway">
    <text evidence="9">Carbohydrate degradation; glycolysis; pyruvate from D-glyceraldehyde 3-phosphate: step 1/5.</text>
</comment>
<comment type="subunit">
    <text evidence="3 5">Homotetramer.</text>
</comment>
<comment type="subcellular location">
    <subcellularLocation>
        <location evidence="6">Cytoplasm</location>
    </subcellularLocation>
</comment>
<comment type="similarity">
    <text evidence="9">Belongs to the glyceraldehyde-3-phosphate dehydrogenase family.</text>
</comment>
<organism>
    <name type="scientific">Thermotoga maritima (strain ATCC 43589 / DSM 3109 / JCM 10099 / NBRC 100826 / MSB8)</name>
    <dbReference type="NCBI Taxonomy" id="243274"/>
    <lineage>
        <taxon>Bacteria</taxon>
        <taxon>Thermotogati</taxon>
        <taxon>Thermotogota</taxon>
        <taxon>Thermotogae</taxon>
        <taxon>Thermotogales</taxon>
        <taxon>Thermotogaceae</taxon>
        <taxon>Thermotoga</taxon>
    </lineage>
</organism>